<reference key="1">
    <citation type="journal article" date="2002" name="Nature">
        <title>The genome sequence of Schizosaccharomyces pombe.</title>
        <authorList>
            <person name="Wood V."/>
            <person name="Gwilliam R."/>
            <person name="Rajandream M.A."/>
            <person name="Lyne M.H."/>
            <person name="Lyne R."/>
            <person name="Stewart A."/>
            <person name="Sgouros J.G."/>
            <person name="Peat N."/>
            <person name="Hayles J."/>
            <person name="Baker S.G."/>
            <person name="Basham D."/>
            <person name="Bowman S."/>
            <person name="Brooks K."/>
            <person name="Brown D."/>
            <person name="Brown S."/>
            <person name="Chillingworth T."/>
            <person name="Churcher C.M."/>
            <person name="Collins M."/>
            <person name="Connor R."/>
            <person name="Cronin A."/>
            <person name="Davis P."/>
            <person name="Feltwell T."/>
            <person name="Fraser A."/>
            <person name="Gentles S."/>
            <person name="Goble A."/>
            <person name="Hamlin N."/>
            <person name="Harris D.E."/>
            <person name="Hidalgo J."/>
            <person name="Hodgson G."/>
            <person name="Holroyd S."/>
            <person name="Hornsby T."/>
            <person name="Howarth S."/>
            <person name="Huckle E.J."/>
            <person name="Hunt S."/>
            <person name="Jagels K."/>
            <person name="James K.D."/>
            <person name="Jones L."/>
            <person name="Jones M."/>
            <person name="Leather S."/>
            <person name="McDonald S."/>
            <person name="McLean J."/>
            <person name="Mooney P."/>
            <person name="Moule S."/>
            <person name="Mungall K.L."/>
            <person name="Murphy L.D."/>
            <person name="Niblett D."/>
            <person name="Odell C."/>
            <person name="Oliver K."/>
            <person name="O'Neil S."/>
            <person name="Pearson D."/>
            <person name="Quail M.A."/>
            <person name="Rabbinowitsch E."/>
            <person name="Rutherford K.M."/>
            <person name="Rutter S."/>
            <person name="Saunders D."/>
            <person name="Seeger K."/>
            <person name="Sharp S."/>
            <person name="Skelton J."/>
            <person name="Simmonds M.N."/>
            <person name="Squares R."/>
            <person name="Squares S."/>
            <person name="Stevens K."/>
            <person name="Taylor K."/>
            <person name="Taylor R.G."/>
            <person name="Tivey A."/>
            <person name="Walsh S.V."/>
            <person name="Warren T."/>
            <person name="Whitehead S."/>
            <person name="Woodward J.R."/>
            <person name="Volckaert G."/>
            <person name="Aert R."/>
            <person name="Robben J."/>
            <person name="Grymonprez B."/>
            <person name="Weltjens I."/>
            <person name="Vanstreels E."/>
            <person name="Rieger M."/>
            <person name="Schaefer M."/>
            <person name="Mueller-Auer S."/>
            <person name="Gabel C."/>
            <person name="Fuchs M."/>
            <person name="Duesterhoeft A."/>
            <person name="Fritzc C."/>
            <person name="Holzer E."/>
            <person name="Moestl D."/>
            <person name="Hilbert H."/>
            <person name="Borzym K."/>
            <person name="Langer I."/>
            <person name="Beck A."/>
            <person name="Lehrach H."/>
            <person name="Reinhardt R."/>
            <person name="Pohl T.M."/>
            <person name="Eger P."/>
            <person name="Zimmermann W."/>
            <person name="Wedler H."/>
            <person name="Wambutt R."/>
            <person name="Purnelle B."/>
            <person name="Goffeau A."/>
            <person name="Cadieu E."/>
            <person name="Dreano S."/>
            <person name="Gloux S."/>
            <person name="Lelaure V."/>
            <person name="Mottier S."/>
            <person name="Galibert F."/>
            <person name="Aves S.J."/>
            <person name="Xiang Z."/>
            <person name="Hunt C."/>
            <person name="Moore K."/>
            <person name="Hurst S.M."/>
            <person name="Lucas M."/>
            <person name="Rochet M."/>
            <person name="Gaillardin C."/>
            <person name="Tallada V.A."/>
            <person name="Garzon A."/>
            <person name="Thode G."/>
            <person name="Daga R.R."/>
            <person name="Cruzado L."/>
            <person name="Jimenez J."/>
            <person name="Sanchez M."/>
            <person name="del Rey F."/>
            <person name="Benito J."/>
            <person name="Dominguez A."/>
            <person name="Revuelta J.L."/>
            <person name="Moreno S."/>
            <person name="Armstrong J."/>
            <person name="Forsburg S.L."/>
            <person name="Cerutti L."/>
            <person name="Lowe T."/>
            <person name="McCombie W.R."/>
            <person name="Paulsen I."/>
            <person name="Potashkin J."/>
            <person name="Shpakovski G.V."/>
            <person name="Ussery D."/>
            <person name="Barrell B.G."/>
            <person name="Nurse P."/>
        </authorList>
    </citation>
    <scope>NUCLEOTIDE SEQUENCE [LARGE SCALE GENOMIC DNA]</scope>
    <source>
        <strain>972 / ATCC 24843</strain>
    </source>
</reference>
<reference key="2">
    <citation type="journal article" date="2006" name="Nat. Biotechnol.">
        <title>ORFeome cloning and global analysis of protein localization in the fission yeast Schizosaccharomyces pombe.</title>
        <authorList>
            <person name="Matsuyama A."/>
            <person name="Arai R."/>
            <person name="Yashiroda Y."/>
            <person name="Shirai A."/>
            <person name="Kamata A."/>
            <person name="Sekido S."/>
            <person name="Kobayashi Y."/>
            <person name="Hashimoto A."/>
            <person name="Hamamoto M."/>
            <person name="Hiraoka Y."/>
            <person name="Horinouchi S."/>
            <person name="Yoshida M."/>
        </authorList>
    </citation>
    <scope>SUBCELLULAR LOCATION [LARGE SCALE ANALYSIS]</scope>
</reference>
<dbReference type="EMBL" id="CU329670">
    <property type="protein sequence ID" value="CAB11690.2"/>
    <property type="molecule type" value="Genomic_DNA"/>
</dbReference>
<dbReference type="PIR" id="T38623">
    <property type="entry name" value="T38623"/>
</dbReference>
<dbReference type="SMR" id="O14106"/>
<dbReference type="PaxDb" id="4896-SPAC31G5.06.1"/>
<dbReference type="EnsemblFungi" id="SPAC31G5.06.1">
    <property type="protein sequence ID" value="SPAC31G5.06.1:pep"/>
    <property type="gene ID" value="SPAC31G5.06"/>
</dbReference>
<dbReference type="KEGG" id="spo:2543185"/>
<dbReference type="PomBase" id="SPAC31G5.06">
    <property type="gene designation" value="rgg8"/>
</dbReference>
<dbReference type="VEuPathDB" id="FungiDB:SPAC31G5.06"/>
<dbReference type="HOGENOM" id="CLU_1185619_0_0_1"/>
<dbReference type="InParanoid" id="O14106"/>
<dbReference type="OMA" id="KRWNMEL"/>
<dbReference type="PRO" id="PR:O14106"/>
<dbReference type="Proteomes" id="UP000002485">
    <property type="component" value="Chromosome I"/>
</dbReference>
<dbReference type="GO" id="GO:0005739">
    <property type="term" value="C:mitochondrion"/>
    <property type="evidence" value="ECO:0000266"/>
    <property type="project" value="PomBase"/>
</dbReference>
<dbReference type="GO" id="GO:0005634">
    <property type="term" value="C:nucleus"/>
    <property type="evidence" value="ECO:0007669"/>
    <property type="project" value="UniProtKB-SubCell"/>
</dbReference>
<dbReference type="GO" id="GO:0097745">
    <property type="term" value="P:mitochondrial tRNA 5'-end processing"/>
    <property type="evidence" value="ECO:0000266"/>
    <property type="project" value="PomBase"/>
</dbReference>
<keyword id="KW-0963">Cytoplasm</keyword>
<keyword id="KW-0539">Nucleus</keyword>
<keyword id="KW-1185">Reference proteome</keyword>
<gene>
    <name type="primary">rgg8</name>
    <name type="ORF">SPAC31G5.06</name>
</gene>
<feature type="chain" id="PRO_0000116720" description="Protein rgg8">
    <location>
        <begin position="1"/>
        <end position="234"/>
    </location>
</feature>
<sequence>MTIKKIISKNDPLISILSSPLRQDLATHFLFPRELLAKFPARKDTNPRKFCLLPLEGKNHLHNKHVSLYCLLSDRYLQPPSKRIFKRWNMELNNLNCPDIKRYILESLQDSLLKEISSLKETSTQNHLHCNDIKILQDCLRRPNISNGGIWVQWNLEEINQLKKFLSFRKLYPRQSFISLLQILPEPFLKSQLSHTLPVGSKYFFVPCDKKHHTLGLLLWKLFFLKDMPAAYSS</sequence>
<organism>
    <name type="scientific">Schizosaccharomyces pombe (strain 972 / ATCC 24843)</name>
    <name type="common">Fission yeast</name>
    <dbReference type="NCBI Taxonomy" id="284812"/>
    <lineage>
        <taxon>Eukaryota</taxon>
        <taxon>Fungi</taxon>
        <taxon>Dikarya</taxon>
        <taxon>Ascomycota</taxon>
        <taxon>Taphrinomycotina</taxon>
        <taxon>Schizosaccharomycetes</taxon>
        <taxon>Schizosaccharomycetales</taxon>
        <taxon>Schizosaccharomycetaceae</taxon>
        <taxon>Schizosaccharomyces</taxon>
    </lineage>
</organism>
<accession>O14106</accession>
<proteinExistence type="predicted"/>
<protein>
    <recommendedName>
        <fullName>Protein rgg8</fullName>
    </recommendedName>
</protein>
<name>RGG8_SCHPO</name>
<evidence type="ECO:0000269" key="1">
    <source>
    </source>
</evidence>
<comment type="subcellular location">
    <subcellularLocation>
        <location evidence="1">Cytoplasm</location>
    </subcellularLocation>
    <subcellularLocation>
        <location evidence="1">Nucleus</location>
    </subcellularLocation>
</comment>